<keyword id="KW-0479">Metal-binding</keyword>
<keyword id="KW-0533">Nickel</keyword>
<keyword id="KW-0862">Zinc</keyword>
<reference key="1">
    <citation type="submission" date="2007-07" db="EMBL/GenBank/DDBJ databases">
        <title>Complete sequence of chromosome of Shewanella baltica OS185.</title>
        <authorList>
            <consortium name="US DOE Joint Genome Institute"/>
            <person name="Copeland A."/>
            <person name="Lucas S."/>
            <person name="Lapidus A."/>
            <person name="Barry K."/>
            <person name="Glavina del Rio T."/>
            <person name="Dalin E."/>
            <person name="Tice H."/>
            <person name="Pitluck S."/>
            <person name="Sims D."/>
            <person name="Brettin T."/>
            <person name="Bruce D."/>
            <person name="Detter J.C."/>
            <person name="Han C."/>
            <person name="Schmutz J."/>
            <person name="Larimer F."/>
            <person name="Land M."/>
            <person name="Hauser L."/>
            <person name="Kyrpides N."/>
            <person name="Mikhailova N."/>
            <person name="Brettar I."/>
            <person name="Rodrigues J."/>
            <person name="Konstantinidis K."/>
            <person name="Tiedje J."/>
            <person name="Richardson P."/>
        </authorList>
    </citation>
    <scope>NUCLEOTIDE SEQUENCE [LARGE SCALE GENOMIC DNA]</scope>
    <source>
        <strain>OS185</strain>
    </source>
</reference>
<name>HYPA_SHEB8</name>
<evidence type="ECO:0000255" key="1">
    <source>
        <dbReference type="HAMAP-Rule" id="MF_00213"/>
    </source>
</evidence>
<accession>A6WMK8</accession>
<proteinExistence type="inferred from homology"/>
<protein>
    <recommendedName>
        <fullName evidence="1">Hydrogenase maturation factor HypA</fullName>
    </recommendedName>
</protein>
<gene>
    <name evidence="1" type="primary">hypA</name>
    <name type="ordered locus">Shew185_1904</name>
</gene>
<organism>
    <name type="scientific">Shewanella baltica (strain OS185)</name>
    <dbReference type="NCBI Taxonomy" id="402882"/>
    <lineage>
        <taxon>Bacteria</taxon>
        <taxon>Pseudomonadati</taxon>
        <taxon>Pseudomonadota</taxon>
        <taxon>Gammaproteobacteria</taxon>
        <taxon>Alteromonadales</taxon>
        <taxon>Shewanellaceae</taxon>
        <taxon>Shewanella</taxon>
    </lineage>
</organism>
<comment type="function">
    <text evidence="1">Involved in the maturation of [NiFe] hydrogenases. Required for nickel insertion into the metal center of the hydrogenase.</text>
</comment>
<comment type="similarity">
    <text evidence="1">Belongs to the HypA/HybF family.</text>
</comment>
<feature type="chain" id="PRO_1000023858" description="Hydrogenase maturation factor HypA">
    <location>
        <begin position="1"/>
        <end position="117"/>
    </location>
</feature>
<feature type="binding site" evidence="1">
    <location>
        <position position="2"/>
    </location>
    <ligand>
        <name>Ni(2+)</name>
        <dbReference type="ChEBI" id="CHEBI:49786"/>
    </ligand>
</feature>
<feature type="binding site" evidence="1">
    <location>
        <position position="73"/>
    </location>
    <ligand>
        <name>Zn(2+)</name>
        <dbReference type="ChEBI" id="CHEBI:29105"/>
    </ligand>
</feature>
<feature type="binding site" evidence="1">
    <location>
        <position position="76"/>
    </location>
    <ligand>
        <name>Zn(2+)</name>
        <dbReference type="ChEBI" id="CHEBI:29105"/>
    </ligand>
</feature>
<feature type="binding site" evidence="1">
    <location>
        <position position="89"/>
    </location>
    <ligand>
        <name>Zn(2+)</name>
        <dbReference type="ChEBI" id="CHEBI:29105"/>
    </ligand>
</feature>
<feature type="binding site" evidence="1">
    <location>
        <position position="92"/>
    </location>
    <ligand>
        <name>Zn(2+)</name>
        <dbReference type="ChEBI" id="CHEBI:29105"/>
    </ligand>
</feature>
<sequence length="117" mass="13115">MHEYSIVSALIEQCEQHALANHAAKITRVDIKLGVMSGVEPSLLQTAFDTFKLDSICKAAQLNIQIQPLVILCQDCQSESVLSERTVVCPTCQSYRTRVLDGEDMLLMQLEMEQDED</sequence>
<dbReference type="EMBL" id="CP000753">
    <property type="protein sequence ID" value="ABS08047.1"/>
    <property type="molecule type" value="Genomic_DNA"/>
</dbReference>
<dbReference type="RefSeq" id="WP_012089008.1">
    <property type="nucleotide sequence ID" value="NC_009665.1"/>
</dbReference>
<dbReference type="SMR" id="A6WMK8"/>
<dbReference type="KEGG" id="sbm:Shew185_1904"/>
<dbReference type="HOGENOM" id="CLU_126929_6_0_6"/>
<dbReference type="GO" id="GO:0016151">
    <property type="term" value="F:nickel cation binding"/>
    <property type="evidence" value="ECO:0007669"/>
    <property type="project" value="UniProtKB-UniRule"/>
</dbReference>
<dbReference type="GO" id="GO:0008270">
    <property type="term" value="F:zinc ion binding"/>
    <property type="evidence" value="ECO:0007669"/>
    <property type="project" value="UniProtKB-UniRule"/>
</dbReference>
<dbReference type="GO" id="GO:0051604">
    <property type="term" value="P:protein maturation"/>
    <property type="evidence" value="ECO:0007669"/>
    <property type="project" value="InterPro"/>
</dbReference>
<dbReference type="GO" id="GO:0036211">
    <property type="term" value="P:protein modification process"/>
    <property type="evidence" value="ECO:0007669"/>
    <property type="project" value="UniProtKB-UniRule"/>
</dbReference>
<dbReference type="Gene3D" id="3.30.2320.80">
    <property type="match status" value="1"/>
</dbReference>
<dbReference type="HAMAP" id="MF_00213">
    <property type="entry name" value="HypA_HybF"/>
    <property type="match status" value="1"/>
</dbReference>
<dbReference type="InterPro" id="IPR020538">
    <property type="entry name" value="Hydgase_Ni_incorp_HypA/HybF_CS"/>
</dbReference>
<dbReference type="InterPro" id="IPR000688">
    <property type="entry name" value="HypA/HybF"/>
</dbReference>
<dbReference type="NCBIfam" id="TIGR00100">
    <property type="entry name" value="hypA"/>
    <property type="match status" value="1"/>
</dbReference>
<dbReference type="PANTHER" id="PTHR34535">
    <property type="entry name" value="HYDROGENASE MATURATION FACTOR HYPA"/>
    <property type="match status" value="1"/>
</dbReference>
<dbReference type="PANTHER" id="PTHR34535:SF3">
    <property type="entry name" value="HYDROGENASE MATURATION FACTOR HYPA"/>
    <property type="match status" value="1"/>
</dbReference>
<dbReference type="Pfam" id="PF01155">
    <property type="entry name" value="HypA"/>
    <property type="match status" value="1"/>
</dbReference>
<dbReference type="PIRSF" id="PIRSF004761">
    <property type="entry name" value="Hydrgn_mat_HypA"/>
    <property type="match status" value="1"/>
</dbReference>
<dbReference type="PROSITE" id="PS01249">
    <property type="entry name" value="HYPA"/>
    <property type="match status" value="1"/>
</dbReference>